<name>RECR_ALIF1</name>
<gene>
    <name evidence="1" type="primary">recR</name>
    <name type="ordered locus">VF_1685</name>
</gene>
<comment type="function">
    <text evidence="1">May play a role in DNA repair. It seems to be involved in an RecBC-independent recombinational process of DNA repair. It may act with RecF and RecO.</text>
</comment>
<comment type="similarity">
    <text evidence="1">Belongs to the RecR family.</text>
</comment>
<keyword id="KW-0227">DNA damage</keyword>
<keyword id="KW-0233">DNA recombination</keyword>
<keyword id="KW-0234">DNA repair</keyword>
<keyword id="KW-0479">Metal-binding</keyword>
<keyword id="KW-1185">Reference proteome</keyword>
<keyword id="KW-0862">Zinc</keyword>
<keyword id="KW-0863">Zinc-finger</keyword>
<accession>Q5E466</accession>
<proteinExistence type="inferred from homology"/>
<feature type="chain" id="PRO_0000190421" description="Recombination protein RecR">
    <location>
        <begin position="1"/>
        <end position="200"/>
    </location>
</feature>
<feature type="domain" description="Toprim" evidence="1">
    <location>
        <begin position="81"/>
        <end position="176"/>
    </location>
</feature>
<feature type="zinc finger region" description="C4-type" evidence="1">
    <location>
        <begin position="57"/>
        <end position="72"/>
    </location>
</feature>
<protein>
    <recommendedName>
        <fullName evidence="1">Recombination protein RecR</fullName>
    </recommendedName>
</protein>
<evidence type="ECO:0000255" key="1">
    <source>
        <dbReference type="HAMAP-Rule" id="MF_00017"/>
    </source>
</evidence>
<reference key="1">
    <citation type="journal article" date="2005" name="Proc. Natl. Acad. Sci. U.S.A.">
        <title>Complete genome sequence of Vibrio fischeri: a symbiotic bacterium with pathogenic congeners.</title>
        <authorList>
            <person name="Ruby E.G."/>
            <person name="Urbanowski M."/>
            <person name="Campbell J."/>
            <person name="Dunn A."/>
            <person name="Faini M."/>
            <person name="Gunsalus R."/>
            <person name="Lostroh P."/>
            <person name="Lupp C."/>
            <person name="McCann J."/>
            <person name="Millikan D."/>
            <person name="Schaefer A."/>
            <person name="Stabb E."/>
            <person name="Stevens A."/>
            <person name="Visick K."/>
            <person name="Whistler C."/>
            <person name="Greenberg E.P."/>
        </authorList>
    </citation>
    <scope>NUCLEOTIDE SEQUENCE [LARGE SCALE GENOMIC DNA]</scope>
    <source>
        <strain>ATCC 700601 / ES114</strain>
    </source>
</reference>
<sequence length="200" mass="21654">MRTSGLLEQLMESLRCLPGVGPKSAQRMAFHLLQRNRQGGMQLADALSQAMSEIGHCSECRTFTEEDTCAICLNPKRQASGEMCIVESPADIVAVEATGQFSGRYFVLMGHLSPLDGIGPSDIGLDLLDHRLNRGDIKEVILATNPTVEGEATAHYIAELCQEHQVPASRIAHGVPMGGELELVDGTTLSHSILGRQKLY</sequence>
<organism>
    <name type="scientific">Aliivibrio fischeri (strain ATCC 700601 / ES114)</name>
    <name type="common">Vibrio fischeri</name>
    <dbReference type="NCBI Taxonomy" id="312309"/>
    <lineage>
        <taxon>Bacteria</taxon>
        <taxon>Pseudomonadati</taxon>
        <taxon>Pseudomonadota</taxon>
        <taxon>Gammaproteobacteria</taxon>
        <taxon>Vibrionales</taxon>
        <taxon>Vibrionaceae</taxon>
        <taxon>Aliivibrio</taxon>
    </lineage>
</organism>
<dbReference type="EMBL" id="CP000020">
    <property type="protein sequence ID" value="AAW86180.1"/>
    <property type="molecule type" value="Genomic_DNA"/>
</dbReference>
<dbReference type="RefSeq" id="WP_011262239.1">
    <property type="nucleotide sequence ID" value="NZ_CAWLES010000001.1"/>
</dbReference>
<dbReference type="RefSeq" id="YP_205068.1">
    <property type="nucleotide sequence ID" value="NC_006840.2"/>
</dbReference>
<dbReference type="SMR" id="Q5E466"/>
<dbReference type="STRING" id="312309.VF_1685"/>
<dbReference type="EnsemblBacteria" id="AAW86180">
    <property type="protein sequence ID" value="AAW86180"/>
    <property type="gene ID" value="VF_1685"/>
</dbReference>
<dbReference type="GeneID" id="54164379"/>
<dbReference type="KEGG" id="vfi:VF_1685"/>
<dbReference type="PATRIC" id="fig|312309.11.peg.1706"/>
<dbReference type="eggNOG" id="COG0353">
    <property type="taxonomic scope" value="Bacteria"/>
</dbReference>
<dbReference type="HOGENOM" id="CLU_060739_1_2_6"/>
<dbReference type="OrthoDB" id="9802672at2"/>
<dbReference type="Proteomes" id="UP000000537">
    <property type="component" value="Chromosome I"/>
</dbReference>
<dbReference type="GO" id="GO:0003677">
    <property type="term" value="F:DNA binding"/>
    <property type="evidence" value="ECO:0007669"/>
    <property type="project" value="UniProtKB-UniRule"/>
</dbReference>
<dbReference type="GO" id="GO:0008270">
    <property type="term" value="F:zinc ion binding"/>
    <property type="evidence" value="ECO:0007669"/>
    <property type="project" value="UniProtKB-KW"/>
</dbReference>
<dbReference type="GO" id="GO:0006310">
    <property type="term" value="P:DNA recombination"/>
    <property type="evidence" value="ECO:0007669"/>
    <property type="project" value="UniProtKB-UniRule"/>
</dbReference>
<dbReference type="GO" id="GO:0006281">
    <property type="term" value="P:DNA repair"/>
    <property type="evidence" value="ECO:0007669"/>
    <property type="project" value="UniProtKB-UniRule"/>
</dbReference>
<dbReference type="CDD" id="cd01025">
    <property type="entry name" value="TOPRIM_recR"/>
    <property type="match status" value="1"/>
</dbReference>
<dbReference type="FunFam" id="1.10.8.420:FF:000001">
    <property type="entry name" value="Recombination protein RecR"/>
    <property type="match status" value="1"/>
</dbReference>
<dbReference type="FunFam" id="3.40.1360.10:FF:000001">
    <property type="entry name" value="Recombination protein RecR"/>
    <property type="match status" value="1"/>
</dbReference>
<dbReference type="Gene3D" id="3.40.1360.10">
    <property type="match status" value="1"/>
</dbReference>
<dbReference type="Gene3D" id="6.10.250.240">
    <property type="match status" value="1"/>
</dbReference>
<dbReference type="Gene3D" id="1.10.8.420">
    <property type="entry name" value="RecR Domain 1"/>
    <property type="match status" value="1"/>
</dbReference>
<dbReference type="HAMAP" id="MF_00017">
    <property type="entry name" value="RecR"/>
    <property type="match status" value="1"/>
</dbReference>
<dbReference type="InterPro" id="IPR000093">
    <property type="entry name" value="DNA_Rcmb_RecR"/>
</dbReference>
<dbReference type="InterPro" id="IPR023627">
    <property type="entry name" value="Rcmb_RecR"/>
</dbReference>
<dbReference type="InterPro" id="IPR015967">
    <property type="entry name" value="Rcmb_RecR_Znf"/>
</dbReference>
<dbReference type="InterPro" id="IPR006171">
    <property type="entry name" value="TOPRIM_dom"/>
</dbReference>
<dbReference type="InterPro" id="IPR034137">
    <property type="entry name" value="TOPRIM_RecR"/>
</dbReference>
<dbReference type="NCBIfam" id="TIGR00615">
    <property type="entry name" value="recR"/>
    <property type="match status" value="1"/>
</dbReference>
<dbReference type="PANTHER" id="PTHR30446">
    <property type="entry name" value="RECOMBINATION PROTEIN RECR"/>
    <property type="match status" value="1"/>
</dbReference>
<dbReference type="PANTHER" id="PTHR30446:SF0">
    <property type="entry name" value="RECOMBINATION PROTEIN RECR"/>
    <property type="match status" value="1"/>
</dbReference>
<dbReference type="Pfam" id="PF21175">
    <property type="entry name" value="RecR_C"/>
    <property type="match status" value="1"/>
</dbReference>
<dbReference type="Pfam" id="PF21176">
    <property type="entry name" value="RecR_HhH"/>
    <property type="match status" value="1"/>
</dbReference>
<dbReference type="Pfam" id="PF02132">
    <property type="entry name" value="RecR_ZnF"/>
    <property type="match status" value="1"/>
</dbReference>
<dbReference type="Pfam" id="PF13662">
    <property type="entry name" value="Toprim_4"/>
    <property type="match status" value="1"/>
</dbReference>
<dbReference type="SMART" id="SM00493">
    <property type="entry name" value="TOPRIM"/>
    <property type="match status" value="1"/>
</dbReference>
<dbReference type="SUPFAM" id="SSF111304">
    <property type="entry name" value="Recombination protein RecR"/>
    <property type="match status" value="1"/>
</dbReference>
<dbReference type="PROSITE" id="PS01300">
    <property type="entry name" value="RECR"/>
    <property type="match status" value="1"/>
</dbReference>
<dbReference type="PROSITE" id="PS50880">
    <property type="entry name" value="TOPRIM"/>
    <property type="match status" value="1"/>
</dbReference>